<evidence type="ECO:0000250" key="1">
    <source>
        <dbReference type="UniProtKB" id="B4XC07"/>
    </source>
</evidence>
<evidence type="ECO:0000250" key="2">
    <source>
        <dbReference type="UniProtKB" id="Q99036"/>
    </source>
</evidence>
<evidence type="ECO:0000255" key="3"/>
<evidence type="ECO:0000305" key="4"/>
<keyword id="KW-0325">Glycoprotein</keyword>
<keyword id="KW-0326">Glycosidase</keyword>
<keyword id="KW-0378">Hydrolase</keyword>
<keyword id="KW-1185">Reference proteome</keyword>
<keyword id="KW-0964">Secreted</keyword>
<keyword id="KW-0732">Signal</keyword>
<sequence>MKCLCFIVLLAIVIAQSYVGVEAAPSDGFVSRNGVQFILNGKPFYANGFNAYWLAYEATDPTTRFKITNVFQNATSLGLTIARTWGFRDGAIYRALQTAPGSYDEQTFQGLDFVIAEAKRIGIKLIILLVNNWDDYGGKKQYVDWARSKGEVVSSNDDFYRNPVIKDFYKNHVKTVLNRVNTFTKVAYKDEPAIMAWQLMNEPRCGVDKSGKTLMDWINEMAPFVKSVDPNHLLSTGHEGFYGDSSPERKNSLNPVSANTVGADFIANHNIDAIDFASMHCGSDLWFQRLDQNSRLAFIKRWLEGHIEDAQNILKKPVILAEFGLGSDTPRYTLANRDGVFTTTYDIIYASAQKGGSAAGALFWEVISEGMSNFAGPSSIILSDKSSTVNIISEHARKMGLLGETTRK</sequence>
<comment type="catalytic activity">
    <reaction>
        <text>Random hydrolysis of (1-&gt;4)-beta-D-mannosidic linkages in mannans, galactomannans and glucomannans.</text>
        <dbReference type="EC" id="3.2.1.78"/>
    </reaction>
</comment>
<comment type="subcellular location">
    <subcellularLocation>
        <location evidence="4">Secreted</location>
    </subcellularLocation>
</comment>
<comment type="similarity">
    <text evidence="4">Belongs to the glycosyl hydrolase 5 (cellulase A) family.</text>
</comment>
<reference key="1">
    <citation type="journal article" date="2000" name="Nature">
        <title>Sequence and analysis of chromosome 3 of the plant Arabidopsis thaliana.</title>
        <authorList>
            <person name="Salanoubat M."/>
            <person name="Lemcke K."/>
            <person name="Rieger M."/>
            <person name="Ansorge W."/>
            <person name="Unseld M."/>
            <person name="Fartmann B."/>
            <person name="Valle G."/>
            <person name="Bloecker H."/>
            <person name="Perez-Alonso M."/>
            <person name="Obermaier B."/>
            <person name="Delseny M."/>
            <person name="Boutry M."/>
            <person name="Grivell L.A."/>
            <person name="Mache R."/>
            <person name="Puigdomenech P."/>
            <person name="De Simone V."/>
            <person name="Choisne N."/>
            <person name="Artiguenave F."/>
            <person name="Robert C."/>
            <person name="Brottier P."/>
            <person name="Wincker P."/>
            <person name="Cattolico L."/>
            <person name="Weissenbach J."/>
            <person name="Saurin W."/>
            <person name="Quetier F."/>
            <person name="Schaefer M."/>
            <person name="Mueller-Auer S."/>
            <person name="Gabel C."/>
            <person name="Fuchs M."/>
            <person name="Benes V."/>
            <person name="Wurmbach E."/>
            <person name="Drzonek H."/>
            <person name="Erfle H."/>
            <person name="Jordan N."/>
            <person name="Bangert S."/>
            <person name="Wiedelmann R."/>
            <person name="Kranz H."/>
            <person name="Voss H."/>
            <person name="Holland R."/>
            <person name="Brandt P."/>
            <person name="Nyakatura G."/>
            <person name="Vezzi A."/>
            <person name="D'Angelo M."/>
            <person name="Pallavicini A."/>
            <person name="Toppo S."/>
            <person name="Simionati B."/>
            <person name="Conrad A."/>
            <person name="Hornischer K."/>
            <person name="Kauer G."/>
            <person name="Loehnert T.-H."/>
            <person name="Nordsiek G."/>
            <person name="Reichelt J."/>
            <person name="Scharfe M."/>
            <person name="Schoen O."/>
            <person name="Bargues M."/>
            <person name="Terol J."/>
            <person name="Climent J."/>
            <person name="Navarro P."/>
            <person name="Collado C."/>
            <person name="Perez-Perez A."/>
            <person name="Ottenwaelder B."/>
            <person name="Duchemin D."/>
            <person name="Cooke R."/>
            <person name="Laudie M."/>
            <person name="Berger-Llauro C."/>
            <person name="Purnelle B."/>
            <person name="Masuy D."/>
            <person name="de Haan M."/>
            <person name="Maarse A.C."/>
            <person name="Alcaraz J.-P."/>
            <person name="Cottet A."/>
            <person name="Casacuberta E."/>
            <person name="Monfort A."/>
            <person name="Argiriou A."/>
            <person name="Flores M."/>
            <person name="Liguori R."/>
            <person name="Vitale D."/>
            <person name="Mannhaupt G."/>
            <person name="Haase D."/>
            <person name="Schoof H."/>
            <person name="Rudd S."/>
            <person name="Zaccaria P."/>
            <person name="Mewes H.-W."/>
            <person name="Mayer K.F.X."/>
            <person name="Kaul S."/>
            <person name="Town C.D."/>
            <person name="Koo H.L."/>
            <person name="Tallon L.J."/>
            <person name="Jenkins J."/>
            <person name="Rooney T."/>
            <person name="Rizzo M."/>
            <person name="Walts A."/>
            <person name="Utterback T."/>
            <person name="Fujii C.Y."/>
            <person name="Shea T.P."/>
            <person name="Creasy T.H."/>
            <person name="Haas B."/>
            <person name="Maiti R."/>
            <person name="Wu D."/>
            <person name="Peterson J."/>
            <person name="Van Aken S."/>
            <person name="Pai G."/>
            <person name="Militscher J."/>
            <person name="Sellers P."/>
            <person name="Gill J.E."/>
            <person name="Feldblyum T.V."/>
            <person name="Preuss D."/>
            <person name="Lin X."/>
            <person name="Nierman W.C."/>
            <person name="Salzberg S.L."/>
            <person name="White O."/>
            <person name="Venter J.C."/>
            <person name="Fraser C.M."/>
            <person name="Kaneko T."/>
            <person name="Nakamura Y."/>
            <person name="Sato S."/>
            <person name="Kato T."/>
            <person name="Asamizu E."/>
            <person name="Sasamoto S."/>
            <person name="Kimura T."/>
            <person name="Idesawa K."/>
            <person name="Kawashima K."/>
            <person name="Kishida Y."/>
            <person name="Kiyokawa C."/>
            <person name="Kohara M."/>
            <person name="Matsumoto M."/>
            <person name="Matsuno A."/>
            <person name="Muraki A."/>
            <person name="Nakayama S."/>
            <person name="Nakazaki N."/>
            <person name="Shinpo S."/>
            <person name="Takeuchi C."/>
            <person name="Wada T."/>
            <person name="Watanabe A."/>
            <person name="Yamada M."/>
            <person name="Yasuda M."/>
            <person name="Tabata S."/>
        </authorList>
    </citation>
    <scope>NUCLEOTIDE SEQUENCE [LARGE SCALE GENOMIC DNA]</scope>
    <source>
        <strain>cv. Columbia</strain>
    </source>
</reference>
<reference key="2">
    <citation type="journal article" date="2017" name="Plant J.">
        <title>Araport11: a complete reannotation of the Arabidopsis thaliana reference genome.</title>
        <authorList>
            <person name="Cheng C.Y."/>
            <person name="Krishnakumar V."/>
            <person name="Chan A.P."/>
            <person name="Thibaud-Nissen F."/>
            <person name="Schobel S."/>
            <person name="Town C.D."/>
        </authorList>
    </citation>
    <scope>GENOME REANNOTATION</scope>
    <source>
        <strain>cv. Columbia</strain>
    </source>
</reference>
<reference key="3">
    <citation type="journal article" date="2007" name="Funct. Integr. Genomics">
        <title>The endo-beta-mannanase gene families in Arabidopsis, rice, and poplar.</title>
        <authorList>
            <person name="Yuan J.S."/>
            <person name="Yang X."/>
            <person name="Lai J."/>
            <person name="Lin H."/>
            <person name="Cheng Z.-M."/>
            <person name="Nonogaki H."/>
            <person name="Chen F."/>
        </authorList>
    </citation>
    <scope>GENE FAMILY</scope>
</reference>
<accession>Q9SG95</accession>
<feature type="signal peptide" evidence="3">
    <location>
        <begin position="1"/>
        <end position="23"/>
    </location>
</feature>
<feature type="chain" id="PRO_0000277477" description="Putative mannan endo-1,4-beta-mannosidase 4">
    <location>
        <begin position="24"/>
        <end position="408"/>
    </location>
</feature>
<feature type="active site" description="Proton donor" evidence="2">
    <location>
        <position position="202"/>
    </location>
</feature>
<feature type="active site" description="Nucleophile" evidence="2">
    <location>
        <position position="322"/>
    </location>
</feature>
<feature type="binding site" evidence="1">
    <location>
        <position position="85"/>
    </location>
    <ligand>
        <name>substrate</name>
    </ligand>
</feature>
<feature type="binding site" evidence="1">
    <location>
        <position position="201"/>
    </location>
    <ligand>
        <name>substrate</name>
    </ligand>
</feature>
<feature type="binding site" evidence="1">
    <location>
        <position position="364"/>
    </location>
    <ligand>
        <name>substrate</name>
    </ligand>
</feature>
<feature type="glycosylation site" description="N-linked (GlcNAc...) asparagine" evidence="3">
    <location>
        <position position="73"/>
    </location>
</feature>
<dbReference type="EC" id="3.2.1.78"/>
<dbReference type="EMBL" id="AC011708">
    <property type="protein sequence ID" value="AAF19559.1"/>
    <property type="molecule type" value="Genomic_DNA"/>
</dbReference>
<dbReference type="EMBL" id="CP002686">
    <property type="protein sequence ID" value="AEE74968.1"/>
    <property type="molecule type" value="Genomic_DNA"/>
</dbReference>
<dbReference type="RefSeq" id="NP_187701.1">
    <property type="nucleotide sequence ID" value="NM_111927.1"/>
</dbReference>
<dbReference type="SMR" id="Q9SG95"/>
<dbReference type="FunCoup" id="Q9SG95">
    <property type="interactions" value="62"/>
</dbReference>
<dbReference type="STRING" id="3702.Q9SG95"/>
<dbReference type="CAZy" id="GH5">
    <property type="family name" value="Glycoside Hydrolase Family 5"/>
</dbReference>
<dbReference type="GlyCosmos" id="Q9SG95">
    <property type="glycosylation" value="1 site, No reported glycans"/>
</dbReference>
<dbReference type="GlyGen" id="Q9SG95">
    <property type="glycosylation" value="1 site"/>
</dbReference>
<dbReference type="PaxDb" id="3702-AT3G10900.1"/>
<dbReference type="ProteomicsDB" id="238553"/>
<dbReference type="EnsemblPlants" id="AT3G10900.1">
    <property type="protein sequence ID" value="AT3G10900.1"/>
    <property type="gene ID" value="AT3G10900"/>
</dbReference>
<dbReference type="GeneID" id="820260"/>
<dbReference type="Gramene" id="AT3G10900.1">
    <property type="protein sequence ID" value="AT3G10900.1"/>
    <property type="gene ID" value="AT3G10900"/>
</dbReference>
<dbReference type="KEGG" id="ath:AT3G10900"/>
<dbReference type="Araport" id="AT3G10900"/>
<dbReference type="TAIR" id="AT3G10900"/>
<dbReference type="eggNOG" id="ENOG502QS4Q">
    <property type="taxonomic scope" value="Eukaryota"/>
</dbReference>
<dbReference type="HOGENOM" id="CLU_031603_0_0_1"/>
<dbReference type="InParanoid" id="Q9SG95"/>
<dbReference type="OMA" id="DWINEMA"/>
<dbReference type="PhylomeDB" id="Q9SG95"/>
<dbReference type="BioCyc" id="ARA:AT3G10900-MONOMER"/>
<dbReference type="PRO" id="PR:Q9SG95"/>
<dbReference type="Proteomes" id="UP000006548">
    <property type="component" value="Chromosome 3"/>
</dbReference>
<dbReference type="ExpressionAtlas" id="Q9SG95">
    <property type="expression patterns" value="baseline and differential"/>
</dbReference>
<dbReference type="GO" id="GO:0005576">
    <property type="term" value="C:extracellular region"/>
    <property type="evidence" value="ECO:0007669"/>
    <property type="project" value="UniProtKB-SubCell"/>
</dbReference>
<dbReference type="GO" id="GO:0016985">
    <property type="term" value="F:mannan endo-1,4-beta-mannosidase activity"/>
    <property type="evidence" value="ECO:0007669"/>
    <property type="project" value="UniProtKB-EC"/>
</dbReference>
<dbReference type="GO" id="GO:0000272">
    <property type="term" value="P:polysaccharide catabolic process"/>
    <property type="evidence" value="ECO:0007669"/>
    <property type="project" value="InterPro"/>
</dbReference>
<dbReference type="FunFam" id="3.20.20.80:FF:000012">
    <property type="entry name" value="Mannan endo-1,4-beta-mannosidase 6"/>
    <property type="match status" value="1"/>
</dbReference>
<dbReference type="Gene3D" id="3.20.20.80">
    <property type="entry name" value="Glycosidases"/>
    <property type="match status" value="1"/>
</dbReference>
<dbReference type="InterPro" id="IPR001547">
    <property type="entry name" value="Glyco_hydro_5"/>
</dbReference>
<dbReference type="InterPro" id="IPR017853">
    <property type="entry name" value="Glycoside_hydrolase_SF"/>
</dbReference>
<dbReference type="InterPro" id="IPR045053">
    <property type="entry name" value="MAN-like"/>
</dbReference>
<dbReference type="PANTHER" id="PTHR31451">
    <property type="match status" value="1"/>
</dbReference>
<dbReference type="PANTHER" id="PTHR31451:SF42">
    <property type="entry name" value="MANNAN ENDO-1,4-BETA-MANNOSIDASE 3-RELATED"/>
    <property type="match status" value="1"/>
</dbReference>
<dbReference type="Pfam" id="PF00150">
    <property type="entry name" value="Cellulase"/>
    <property type="match status" value="1"/>
</dbReference>
<dbReference type="SUPFAM" id="SSF51445">
    <property type="entry name" value="(Trans)glycosidases"/>
    <property type="match status" value="1"/>
</dbReference>
<proteinExistence type="inferred from homology"/>
<protein>
    <recommendedName>
        <fullName>Putative mannan endo-1,4-beta-mannosidase 4</fullName>
        <ecNumber>3.2.1.78</ecNumber>
    </recommendedName>
    <alternativeName>
        <fullName>Beta-mannanase 4</fullName>
    </alternativeName>
    <alternativeName>
        <fullName>Endo-beta-1,4-mannanase 4</fullName>
        <shortName>AtMAN4</shortName>
    </alternativeName>
</protein>
<name>MAN4_ARATH</name>
<organism>
    <name type="scientific">Arabidopsis thaliana</name>
    <name type="common">Mouse-ear cress</name>
    <dbReference type="NCBI Taxonomy" id="3702"/>
    <lineage>
        <taxon>Eukaryota</taxon>
        <taxon>Viridiplantae</taxon>
        <taxon>Streptophyta</taxon>
        <taxon>Embryophyta</taxon>
        <taxon>Tracheophyta</taxon>
        <taxon>Spermatophyta</taxon>
        <taxon>Magnoliopsida</taxon>
        <taxon>eudicotyledons</taxon>
        <taxon>Gunneridae</taxon>
        <taxon>Pentapetalae</taxon>
        <taxon>rosids</taxon>
        <taxon>malvids</taxon>
        <taxon>Brassicales</taxon>
        <taxon>Brassicaceae</taxon>
        <taxon>Camelineae</taxon>
        <taxon>Arabidopsis</taxon>
    </lineage>
</organism>
<gene>
    <name type="primary">MAN4</name>
    <name type="ordered locus">At3g10900</name>
    <name type="ORF">T7M13.2</name>
</gene>